<sequence length="461" mass="51931">MVFFWRKSDVEKKAEKGDKNAILELIKQGKKEKAEKILKKYASQREDLAELLFELYVQEGKLVQAYPLLKKYGDKIGKAKERAKVYQAVGEYQKAIEEFLKVGDFESLYNVAKIYHQLEKPDKALEYAQRAEKLVPYEKKEELENFITQLKKELGLIEEKKESILDKLRRGLQKTKEAVEFGVLFRGRKVDEEFFEELEEMLVKADVGVKTAVELTEKLRKEAIRKNIKEGEKIKELLKKELKELLKNCQGELKIPEKVGAVLLFVGVNGSGKTTTIGKLAHQLKQKGKKVLLVAGDTFRAAAIEQLEVWAKRAGVDIVKKEEGSDPGAVVYEGMKKAKEEGYEVVLVDTAGRLHTKEPLINELRKIKKVIQKFDKEEPSETLLVIDATTGQNAIQQAKVFKEAVDITGIVVTKLDGSAKGGAVVAICRELKIPIKLVGVGEGIDDLQPFDADAYVEALLE</sequence>
<accession>O67066</accession>
<feature type="chain" id="PRO_0000101126" description="Signal recognition particle receptor FtsY">
    <location>
        <begin position="1"/>
        <end position="461"/>
    </location>
</feature>
<feature type="repeat" description="TPR">
    <location>
        <begin position="105"/>
        <end position="138"/>
    </location>
</feature>
<feature type="binding site" evidence="1">
    <location>
        <begin position="267"/>
        <end position="274"/>
    </location>
    <ligand>
        <name>GTP</name>
        <dbReference type="ChEBI" id="CHEBI:37565"/>
    </ligand>
</feature>
<feature type="binding site" evidence="1">
    <location>
        <begin position="349"/>
        <end position="353"/>
    </location>
    <ligand>
        <name>GTP</name>
        <dbReference type="ChEBI" id="CHEBI:37565"/>
    </ligand>
</feature>
<feature type="binding site" evidence="1">
    <location>
        <begin position="413"/>
        <end position="416"/>
    </location>
    <ligand>
        <name>GTP</name>
        <dbReference type="ChEBI" id="CHEBI:37565"/>
    </ligand>
</feature>
<evidence type="ECO:0000255" key="1">
    <source>
        <dbReference type="HAMAP-Rule" id="MF_00920"/>
    </source>
</evidence>
<organism>
    <name type="scientific">Aquifex aeolicus (strain VF5)</name>
    <dbReference type="NCBI Taxonomy" id="224324"/>
    <lineage>
        <taxon>Bacteria</taxon>
        <taxon>Pseudomonadati</taxon>
        <taxon>Aquificota</taxon>
        <taxon>Aquificia</taxon>
        <taxon>Aquificales</taxon>
        <taxon>Aquificaceae</taxon>
        <taxon>Aquifex</taxon>
    </lineage>
</organism>
<keyword id="KW-0997">Cell inner membrane</keyword>
<keyword id="KW-1003">Cell membrane</keyword>
<keyword id="KW-0963">Cytoplasm</keyword>
<keyword id="KW-0342">GTP-binding</keyword>
<keyword id="KW-0378">Hydrolase</keyword>
<keyword id="KW-0472">Membrane</keyword>
<keyword id="KW-0547">Nucleotide-binding</keyword>
<keyword id="KW-0675">Receptor</keyword>
<keyword id="KW-1185">Reference proteome</keyword>
<keyword id="KW-0802">TPR repeat</keyword>
<proteinExistence type="inferred from homology"/>
<comment type="function">
    <text evidence="1">Involved in targeting and insertion of nascent membrane proteins into the cytoplasmic membrane. Acts as a receptor for the complex formed by the signal recognition particle (SRP) and the ribosome-nascent chain (RNC).</text>
</comment>
<comment type="catalytic activity">
    <reaction evidence="1">
        <text>GTP + H2O = GDP + phosphate + H(+)</text>
        <dbReference type="Rhea" id="RHEA:19669"/>
        <dbReference type="ChEBI" id="CHEBI:15377"/>
        <dbReference type="ChEBI" id="CHEBI:15378"/>
        <dbReference type="ChEBI" id="CHEBI:37565"/>
        <dbReference type="ChEBI" id="CHEBI:43474"/>
        <dbReference type="ChEBI" id="CHEBI:58189"/>
        <dbReference type="EC" id="3.6.5.4"/>
    </reaction>
</comment>
<comment type="subunit">
    <text evidence="1">Part of the signal recognition particle protein translocation system, which is composed of SRP and FtsY.</text>
</comment>
<comment type="subcellular location">
    <subcellularLocation>
        <location>Cell inner membrane</location>
        <topology>Peripheral membrane protein</topology>
        <orientation>Cytoplasmic side</orientation>
    </subcellularLocation>
    <subcellularLocation>
        <location evidence="1">Cytoplasm</location>
    </subcellularLocation>
</comment>
<comment type="similarity">
    <text evidence="1">Belongs to the GTP-binding SRP family. FtsY subfamily.</text>
</comment>
<name>FTSY_AQUAE</name>
<protein>
    <recommendedName>
        <fullName evidence="1">Signal recognition particle receptor FtsY</fullName>
        <shortName evidence="1">SRP receptor</shortName>
        <ecNumber evidence="1">3.6.5.4</ecNumber>
    </recommendedName>
</protein>
<gene>
    <name evidence="1" type="primary">ftsY</name>
    <name type="ordered locus">aq_920</name>
</gene>
<dbReference type="EC" id="3.6.5.4" evidence="1"/>
<dbReference type="EMBL" id="AE000657">
    <property type="protein sequence ID" value="AAC07030.1"/>
    <property type="molecule type" value="Genomic_DNA"/>
</dbReference>
<dbReference type="PIR" id="G70379">
    <property type="entry name" value="G70379"/>
</dbReference>
<dbReference type="RefSeq" id="NP_213628.1">
    <property type="nucleotide sequence ID" value="NC_000918.1"/>
</dbReference>
<dbReference type="RefSeq" id="WP_010880566.1">
    <property type="nucleotide sequence ID" value="NC_000918.1"/>
</dbReference>
<dbReference type="SMR" id="O67066"/>
<dbReference type="FunCoup" id="O67066">
    <property type="interactions" value="469"/>
</dbReference>
<dbReference type="STRING" id="224324.aq_920"/>
<dbReference type="EnsemblBacteria" id="AAC07030">
    <property type="protein sequence ID" value="AAC07030"/>
    <property type="gene ID" value="aq_920"/>
</dbReference>
<dbReference type="KEGG" id="aae:aq_920"/>
<dbReference type="PATRIC" id="fig|224324.8.peg.721"/>
<dbReference type="eggNOG" id="COG0457">
    <property type="taxonomic scope" value="Bacteria"/>
</dbReference>
<dbReference type="eggNOG" id="COG0552">
    <property type="taxonomic scope" value="Bacteria"/>
</dbReference>
<dbReference type="HOGENOM" id="CLU_009301_3_5_0"/>
<dbReference type="InParanoid" id="O67066"/>
<dbReference type="OrthoDB" id="9804720at2"/>
<dbReference type="Proteomes" id="UP000000798">
    <property type="component" value="Chromosome"/>
</dbReference>
<dbReference type="GO" id="GO:0005737">
    <property type="term" value="C:cytoplasm"/>
    <property type="evidence" value="ECO:0007669"/>
    <property type="project" value="UniProtKB-SubCell"/>
</dbReference>
<dbReference type="GO" id="GO:0005886">
    <property type="term" value="C:plasma membrane"/>
    <property type="evidence" value="ECO:0000318"/>
    <property type="project" value="GO_Central"/>
</dbReference>
<dbReference type="GO" id="GO:0016887">
    <property type="term" value="F:ATP hydrolysis activity"/>
    <property type="evidence" value="ECO:0007669"/>
    <property type="project" value="InterPro"/>
</dbReference>
<dbReference type="GO" id="GO:0005525">
    <property type="term" value="F:GTP binding"/>
    <property type="evidence" value="ECO:0007669"/>
    <property type="project" value="UniProtKB-UniRule"/>
</dbReference>
<dbReference type="GO" id="GO:0003924">
    <property type="term" value="F:GTPase activity"/>
    <property type="evidence" value="ECO:0000318"/>
    <property type="project" value="GO_Central"/>
</dbReference>
<dbReference type="GO" id="GO:0005047">
    <property type="term" value="F:signal recognition particle binding"/>
    <property type="evidence" value="ECO:0000318"/>
    <property type="project" value="GO_Central"/>
</dbReference>
<dbReference type="GO" id="GO:0006605">
    <property type="term" value="P:protein targeting"/>
    <property type="evidence" value="ECO:0000318"/>
    <property type="project" value="GO_Central"/>
</dbReference>
<dbReference type="GO" id="GO:0006614">
    <property type="term" value="P:SRP-dependent cotranslational protein targeting to membrane"/>
    <property type="evidence" value="ECO:0007669"/>
    <property type="project" value="InterPro"/>
</dbReference>
<dbReference type="CDD" id="cd17874">
    <property type="entry name" value="FtsY"/>
    <property type="match status" value="1"/>
</dbReference>
<dbReference type="FunFam" id="1.20.120.140:FF:000002">
    <property type="entry name" value="Signal recognition particle receptor FtsY"/>
    <property type="match status" value="1"/>
</dbReference>
<dbReference type="FunFam" id="3.40.50.300:FF:000053">
    <property type="entry name" value="Signal recognition particle receptor FtsY"/>
    <property type="match status" value="1"/>
</dbReference>
<dbReference type="Gene3D" id="3.40.50.300">
    <property type="entry name" value="P-loop containing nucleotide triphosphate hydrolases"/>
    <property type="match status" value="1"/>
</dbReference>
<dbReference type="Gene3D" id="1.20.120.140">
    <property type="entry name" value="Signal recognition particle SRP54, nucleotide-binding domain"/>
    <property type="match status" value="1"/>
</dbReference>
<dbReference type="Gene3D" id="1.25.40.10">
    <property type="entry name" value="Tetratricopeptide repeat domain"/>
    <property type="match status" value="1"/>
</dbReference>
<dbReference type="HAMAP" id="MF_00920">
    <property type="entry name" value="FtsY"/>
    <property type="match status" value="1"/>
</dbReference>
<dbReference type="InterPro" id="IPR003593">
    <property type="entry name" value="AAA+_ATPase"/>
</dbReference>
<dbReference type="InterPro" id="IPR027417">
    <property type="entry name" value="P-loop_NTPase"/>
</dbReference>
<dbReference type="InterPro" id="IPR013822">
    <property type="entry name" value="Signal_recog_particl_SRP54_hlx"/>
</dbReference>
<dbReference type="InterPro" id="IPR004390">
    <property type="entry name" value="SR_rcpt_FtsY"/>
</dbReference>
<dbReference type="InterPro" id="IPR036225">
    <property type="entry name" value="SRP/SRP_N"/>
</dbReference>
<dbReference type="InterPro" id="IPR000897">
    <property type="entry name" value="SRP54_GTPase_dom"/>
</dbReference>
<dbReference type="InterPro" id="IPR042101">
    <property type="entry name" value="SRP54_N_sf"/>
</dbReference>
<dbReference type="InterPro" id="IPR011990">
    <property type="entry name" value="TPR-like_helical_dom_sf"/>
</dbReference>
<dbReference type="InterPro" id="IPR019734">
    <property type="entry name" value="TPR_rpt"/>
</dbReference>
<dbReference type="NCBIfam" id="TIGR00064">
    <property type="entry name" value="ftsY"/>
    <property type="match status" value="1"/>
</dbReference>
<dbReference type="PANTHER" id="PTHR43134">
    <property type="entry name" value="SIGNAL RECOGNITION PARTICLE RECEPTOR SUBUNIT ALPHA"/>
    <property type="match status" value="1"/>
</dbReference>
<dbReference type="PANTHER" id="PTHR43134:SF1">
    <property type="entry name" value="SIGNAL RECOGNITION PARTICLE RECEPTOR SUBUNIT ALPHA"/>
    <property type="match status" value="1"/>
</dbReference>
<dbReference type="Pfam" id="PF00448">
    <property type="entry name" value="SRP54"/>
    <property type="match status" value="1"/>
</dbReference>
<dbReference type="Pfam" id="PF02881">
    <property type="entry name" value="SRP54_N"/>
    <property type="match status" value="1"/>
</dbReference>
<dbReference type="SMART" id="SM00382">
    <property type="entry name" value="AAA"/>
    <property type="match status" value="1"/>
</dbReference>
<dbReference type="SMART" id="SM00962">
    <property type="entry name" value="SRP54"/>
    <property type="match status" value="1"/>
</dbReference>
<dbReference type="SMART" id="SM00963">
    <property type="entry name" value="SRP54_N"/>
    <property type="match status" value="1"/>
</dbReference>
<dbReference type="SMART" id="SM00028">
    <property type="entry name" value="TPR"/>
    <property type="match status" value="1"/>
</dbReference>
<dbReference type="SUPFAM" id="SSF47364">
    <property type="entry name" value="Domain of the SRP/SRP receptor G-proteins"/>
    <property type="match status" value="1"/>
</dbReference>
<dbReference type="SUPFAM" id="SSF52540">
    <property type="entry name" value="P-loop containing nucleoside triphosphate hydrolases"/>
    <property type="match status" value="1"/>
</dbReference>
<dbReference type="SUPFAM" id="SSF48452">
    <property type="entry name" value="TPR-like"/>
    <property type="match status" value="1"/>
</dbReference>
<dbReference type="PROSITE" id="PS00300">
    <property type="entry name" value="SRP54"/>
    <property type="match status" value="1"/>
</dbReference>
<dbReference type="PROSITE" id="PS50005">
    <property type="entry name" value="TPR"/>
    <property type="match status" value="1"/>
</dbReference>
<dbReference type="PROSITE" id="PS50293">
    <property type="entry name" value="TPR_REGION"/>
    <property type="match status" value="1"/>
</dbReference>
<reference key="1">
    <citation type="journal article" date="1998" name="Nature">
        <title>The complete genome of the hyperthermophilic bacterium Aquifex aeolicus.</title>
        <authorList>
            <person name="Deckert G."/>
            <person name="Warren P.V."/>
            <person name="Gaasterland T."/>
            <person name="Young W.G."/>
            <person name="Lenox A.L."/>
            <person name="Graham D.E."/>
            <person name="Overbeek R."/>
            <person name="Snead M.A."/>
            <person name="Keller M."/>
            <person name="Aujay M."/>
            <person name="Huber R."/>
            <person name="Feldman R.A."/>
            <person name="Short J.M."/>
            <person name="Olsen G.J."/>
            <person name="Swanson R.V."/>
        </authorList>
    </citation>
    <scope>NUCLEOTIDE SEQUENCE [LARGE SCALE GENOMIC DNA]</scope>
    <source>
        <strain>VF5</strain>
    </source>
</reference>